<protein>
    <recommendedName>
        <fullName evidence="1">GTP 3',8-cyclase</fullName>
        <ecNumber evidence="1">4.1.99.22</ecNumber>
    </recommendedName>
    <alternativeName>
        <fullName evidence="1">Molybdenum cofactor biosynthesis protein A</fullName>
    </alternativeName>
</protein>
<name>MOAA_CLOBK</name>
<dbReference type="EC" id="4.1.99.22" evidence="1"/>
<dbReference type="EMBL" id="CP000939">
    <property type="protein sequence ID" value="ACA44147.1"/>
    <property type="molecule type" value="Genomic_DNA"/>
</dbReference>
<dbReference type="RefSeq" id="WP_015957581.1">
    <property type="nucleotide sequence ID" value="NC_010516.1"/>
</dbReference>
<dbReference type="SMR" id="B1IN35"/>
<dbReference type="KEGG" id="cbb:CLD_2684"/>
<dbReference type="HOGENOM" id="CLU_009273_0_1_9"/>
<dbReference type="UniPathway" id="UPA00344"/>
<dbReference type="Proteomes" id="UP000008541">
    <property type="component" value="Chromosome"/>
</dbReference>
<dbReference type="GO" id="GO:0051539">
    <property type="term" value="F:4 iron, 4 sulfur cluster binding"/>
    <property type="evidence" value="ECO:0007669"/>
    <property type="project" value="UniProtKB-UniRule"/>
</dbReference>
<dbReference type="GO" id="GO:0061799">
    <property type="term" value="F:cyclic pyranopterin monophosphate synthase activity"/>
    <property type="evidence" value="ECO:0007669"/>
    <property type="project" value="TreeGrafter"/>
</dbReference>
<dbReference type="GO" id="GO:0061798">
    <property type="term" value="F:GTP 3',8'-cyclase activity"/>
    <property type="evidence" value="ECO:0007669"/>
    <property type="project" value="UniProtKB-UniRule"/>
</dbReference>
<dbReference type="GO" id="GO:0005525">
    <property type="term" value="F:GTP binding"/>
    <property type="evidence" value="ECO:0007669"/>
    <property type="project" value="UniProtKB-UniRule"/>
</dbReference>
<dbReference type="GO" id="GO:0046872">
    <property type="term" value="F:metal ion binding"/>
    <property type="evidence" value="ECO:0007669"/>
    <property type="project" value="UniProtKB-KW"/>
</dbReference>
<dbReference type="GO" id="GO:1904047">
    <property type="term" value="F:S-adenosyl-L-methionine binding"/>
    <property type="evidence" value="ECO:0007669"/>
    <property type="project" value="UniProtKB-UniRule"/>
</dbReference>
<dbReference type="GO" id="GO:0006777">
    <property type="term" value="P:Mo-molybdopterin cofactor biosynthetic process"/>
    <property type="evidence" value="ECO:0007669"/>
    <property type="project" value="UniProtKB-UniRule"/>
</dbReference>
<dbReference type="CDD" id="cd01335">
    <property type="entry name" value="Radical_SAM"/>
    <property type="match status" value="1"/>
</dbReference>
<dbReference type="CDD" id="cd21117">
    <property type="entry name" value="Twitch_MoaA"/>
    <property type="match status" value="1"/>
</dbReference>
<dbReference type="Gene3D" id="3.20.20.70">
    <property type="entry name" value="Aldolase class I"/>
    <property type="match status" value="1"/>
</dbReference>
<dbReference type="HAMAP" id="MF_01225_B">
    <property type="entry name" value="MoaA_B"/>
    <property type="match status" value="1"/>
</dbReference>
<dbReference type="InterPro" id="IPR013785">
    <property type="entry name" value="Aldolase_TIM"/>
</dbReference>
<dbReference type="InterPro" id="IPR006638">
    <property type="entry name" value="Elp3/MiaA/NifB-like_rSAM"/>
</dbReference>
<dbReference type="InterPro" id="IPR013483">
    <property type="entry name" value="MoaA"/>
</dbReference>
<dbReference type="InterPro" id="IPR000385">
    <property type="entry name" value="MoaA_NifB_PqqE_Fe-S-bd_CS"/>
</dbReference>
<dbReference type="InterPro" id="IPR010505">
    <property type="entry name" value="MoaA_twitch"/>
</dbReference>
<dbReference type="InterPro" id="IPR050105">
    <property type="entry name" value="MoCo_biosynth_MoaA/MoaC"/>
</dbReference>
<dbReference type="InterPro" id="IPR007197">
    <property type="entry name" value="rSAM"/>
</dbReference>
<dbReference type="NCBIfam" id="TIGR02666">
    <property type="entry name" value="moaA"/>
    <property type="match status" value="1"/>
</dbReference>
<dbReference type="NCBIfam" id="NF001199">
    <property type="entry name" value="PRK00164.2-1"/>
    <property type="match status" value="1"/>
</dbReference>
<dbReference type="PANTHER" id="PTHR22960:SF0">
    <property type="entry name" value="MOLYBDENUM COFACTOR BIOSYNTHESIS PROTEIN 1"/>
    <property type="match status" value="1"/>
</dbReference>
<dbReference type="PANTHER" id="PTHR22960">
    <property type="entry name" value="MOLYBDOPTERIN COFACTOR SYNTHESIS PROTEIN A"/>
    <property type="match status" value="1"/>
</dbReference>
<dbReference type="Pfam" id="PF13353">
    <property type="entry name" value="Fer4_12"/>
    <property type="match status" value="1"/>
</dbReference>
<dbReference type="Pfam" id="PF06463">
    <property type="entry name" value="Mob_synth_C"/>
    <property type="match status" value="1"/>
</dbReference>
<dbReference type="Pfam" id="PF04055">
    <property type="entry name" value="Radical_SAM"/>
    <property type="match status" value="1"/>
</dbReference>
<dbReference type="SFLD" id="SFLDG01383">
    <property type="entry name" value="cyclic_pyranopterin_phosphate"/>
    <property type="match status" value="1"/>
</dbReference>
<dbReference type="SFLD" id="SFLDS00029">
    <property type="entry name" value="Radical_SAM"/>
    <property type="match status" value="1"/>
</dbReference>
<dbReference type="SMART" id="SM00729">
    <property type="entry name" value="Elp3"/>
    <property type="match status" value="1"/>
</dbReference>
<dbReference type="SUPFAM" id="SSF102114">
    <property type="entry name" value="Radical SAM enzymes"/>
    <property type="match status" value="1"/>
</dbReference>
<dbReference type="PROSITE" id="PS01305">
    <property type="entry name" value="MOAA_NIFB_PQQE"/>
    <property type="match status" value="1"/>
</dbReference>
<dbReference type="PROSITE" id="PS51918">
    <property type="entry name" value="RADICAL_SAM"/>
    <property type="match status" value="1"/>
</dbReference>
<comment type="function">
    <text evidence="1">Catalyzes the cyclization of GTP to (8S)-3',8-cyclo-7,8-dihydroguanosine 5'-triphosphate.</text>
</comment>
<comment type="catalytic activity">
    <reaction evidence="1">
        <text>GTP + AH2 + S-adenosyl-L-methionine = (8S)-3',8-cyclo-7,8-dihydroguanosine 5'-triphosphate + 5'-deoxyadenosine + L-methionine + A + H(+)</text>
        <dbReference type="Rhea" id="RHEA:49576"/>
        <dbReference type="ChEBI" id="CHEBI:13193"/>
        <dbReference type="ChEBI" id="CHEBI:15378"/>
        <dbReference type="ChEBI" id="CHEBI:17319"/>
        <dbReference type="ChEBI" id="CHEBI:17499"/>
        <dbReference type="ChEBI" id="CHEBI:37565"/>
        <dbReference type="ChEBI" id="CHEBI:57844"/>
        <dbReference type="ChEBI" id="CHEBI:59789"/>
        <dbReference type="ChEBI" id="CHEBI:131766"/>
        <dbReference type="EC" id="4.1.99.22"/>
    </reaction>
</comment>
<comment type="cofactor">
    <cofactor evidence="1">
        <name>[4Fe-4S] cluster</name>
        <dbReference type="ChEBI" id="CHEBI:49883"/>
    </cofactor>
    <text evidence="1">Binds 2 [4Fe-4S] clusters. Binds 1 [4Fe-4S] cluster coordinated with 3 cysteines and an exchangeable S-adenosyl-L-methionine and 1 [4Fe-4S] cluster coordinated with 3 cysteines and the GTP-derived substrate.</text>
</comment>
<comment type="pathway">
    <text evidence="1">Cofactor biosynthesis; molybdopterin biosynthesis.</text>
</comment>
<comment type="subunit">
    <text evidence="1">Monomer and homodimer.</text>
</comment>
<comment type="similarity">
    <text evidence="1">Belongs to the radical SAM superfamily. MoaA family.</text>
</comment>
<accession>B1IN35</accession>
<reference key="1">
    <citation type="journal article" date="2007" name="PLoS ONE">
        <title>Analysis of the neurotoxin complex genes in Clostridium botulinum A1-A4 and B1 strains: BoNT/A3, /Ba4 and /B1 clusters are located within plasmids.</title>
        <authorList>
            <person name="Smith T.J."/>
            <person name="Hill K.K."/>
            <person name="Foley B.T."/>
            <person name="Detter J.C."/>
            <person name="Munk A.C."/>
            <person name="Bruce D.C."/>
            <person name="Doggett N.A."/>
            <person name="Smith L.A."/>
            <person name="Marks J.D."/>
            <person name="Xie G."/>
            <person name="Brettin T.S."/>
        </authorList>
    </citation>
    <scope>NUCLEOTIDE SEQUENCE [LARGE SCALE GENOMIC DNA]</scope>
    <source>
        <strain>Okra / Type B1</strain>
    </source>
</reference>
<feature type="chain" id="PRO_1000139315" description="GTP 3',8-cyclase">
    <location>
        <begin position="1"/>
        <end position="319"/>
    </location>
</feature>
<feature type="domain" description="Radical SAM core" evidence="2">
    <location>
        <begin position="4"/>
        <end position="219"/>
    </location>
</feature>
<feature type="binding site" evidence="1">
    <location>
        <position position="13"/>
    </location>
    <ligand>
        <name>GTP</name>
        <dbReference type="ChEBI" id="CHEBI:37565"/>
    </ligand>
</feature>
<feature type="binding site" evidence="1">
    <location>
        <position position="20"/>
    </location>
    <ligand>
        <name>[4Fe-4S] cluster</name>
        <dbReference type="ChEBI" id="CHEBI:49883"/>
        <label>1</label>
        <note>4Fe-4S-S-AdoMet</note>
    </ligand>
</feature>
<feature type="binding site" evidence="1">
    <location>
        <position position="24"/>
    </location>
    <ligand>
        <name>[4Fe-4S] cluster</name>
        <dbReference type="ChEBI" id="CHEBI:49883"/>
        <label>1</label>
        <note>4Fe-4S-S-AdoMet</note>
    </ligand>
</feature>
<feature type="binding site" evidence="1">
    <location>
        <position position="26"/>
    </location>
    <ligand>
        <name>S-adenosyl-L-methionine</name>
        <dbReference type="ChEBI" id="CHEBI:59789"/>
    </ligand>
</feature>
<feature type="binding site" evidence="1">
    <location>
        <position position="27"/>
    </location>
    <ligand>
        <name>[4Fe-4S] cluster</name>
        <dbReference type="ChEBI" id="CHEBI:49883"/>
        <label>1</label>
        <note>4Fe-4S-S-AdoMet</note>
    </ligand>
</feature>
<feature type="binding site" evidence="1">
    <location>
        <position position="63"/>
    </location>
    <ligand>
        <name>GTP</name>
        <dbReference type="ChEBI" id="CHEBI:37565"/>
    </ligand>
</feature>
<feature type="binding site" evidence="1">
    <location>
        <position position="67"/>
    </location>
    <ligand>
        <name>S-adenosyl-L-methionine</name>
        <dbReference type="ChEBI" id="CHEBI:59789"/>
    </ligand>
</feature>
<feature type="binding site" evidence="1">
    <location>
        <position position="94"/>
    </location>
    <ligand>
        <name>GTP</name>
        <dbReference type="ChEBI" id="CHEBI:37565"/>
    </ligand>
</feature>
<feature type="binding site" evidence="1">
    <location>
        <position position="118"/>
    </location>
    <ligand>
        <name>S-adenosyl-L-methionine</name>
        <dbReference type="ChEBI" id="CHEBI:59789"/>
    </ligand>
</feature>
<feature type="binding site" evidence="1">
    <location>
        <position position="155"/>
    </location>
    <ligand>
        <name>GTP</name>
        <dbReference type="ChEBI" id="CHEBI:37565"/>
    </ligand>
</feature>
<feature type="binding site" evidence="1">
    <location>
        <position position="189"/>
    </location>
    <ligand>
        <name>S-adenosyl-L-methionine</name>
        <dbReference type="ChEBI" id="CHEBI:59789"/>
    </ligand>
</feature>
<feature type="binding site" evidence="1">
    <location>
        <position position="249"/>
    </location>
    <ligand>
        <name>[4Fe-4S] cluster</name>
        <dbReference type="ChEBI" id="CHEBI:49883"/>
        <label>2</label>
        <note>4Fe-4S-substrate</note>
    </ligand>
</feature>
<feature type="binding site" evidence="1">
    <location>
        <position position="252"/>
    </location>
    <ligand>
        <name>[4Fe-4S] cluster</name>
        <dbReference type="ChEBI" id="CHEBI:49883"/>
        <label>2</label>
        <note>4Fe-4S-substrate</note>
    </ligand>
</feature>
<feature type="binding site" evidence="1">
    <location>
        <begin position="254"/>
        <end position="256"/>
    </location>
    <ligand>
        <name>GTP</name>
        <dbReference type="ChEBI" id="CHEBI:37565"/>
    </ligand>
</feature>
<feature type="binding site" evidence="1">
    <location>
        <position position="266"/>
    </location>
    <ligand>
        <name>[4Fe-4S] cluster</name>
        <dbReference type="ChEBI" id="CHEBI:49883"/>
        <label>2</label>
        <note>4Fe-4S-substrate</note>
    </ligand>
</feature>
<organism>
    <name type="scientific">Clostridium botulinum (strain Okra / Type B1)</name>
    <dbReference type="NCBI Taxonomy" id="498213"/>
    <lineage>
        <taxon>Bacteria</taxon>
        <taxon>Bacillati</taxon>
        <taxon>Bacillota</taxon>
        <taxon>Clostridia</taxon>
        <taxon>Eubacteriales</taxon>
        <taxon>Clostridiaceae</taxon>
        <taxon>Clostridium</taxon>
    </lineage>
</organism>
<gene>
    <name evidence="1" type="primary">moaA</name>
    <name type="ordered locus">CLD_2684</name>
</gene>
<sequence>MLDKHGRKINYLRVSVTDRCNLRCVYCMPPEGIVKKEHDNIMRYEEIFKVVKSASLLGVNKIRFTGGEPLILKDIDKLIYNTSKINSIKDIAMTTNAILLEDMVEELKKDGLKRVNISLDSLKEDRFKSITRGGDINKVFKSIEKSLSIGMKPIKINTVIMKGINDDEIDDFMNLTKKYPISVRFIELMPIGEGRKLYEDSYISSEEIISKHSDLIPVETDKSSTALLYKFKESKENIGFISPMSCKFCSGCNRVRLTSEGTLKPCLHSEKEVDLKNYVDSSQALLSKINETIYNKPLEHHMIEEKESKSKKMMYQIGG</sequence>
<keyword id="KW-0004">4Fe-4S</keyword>
<keyword id="KW-0342">GTP-binding</keyword>
<keyword id="KW-0408">Iron</keyword>
<keyword id="KW-0411">Iron-sulfur</keyword>
<keyword id="KW-0456">Lyase</keyword>
<keyword id="KW-0479">Metal-binding</keyword>
<keyword id="KW-0501">Molybdenum cofactor biosynthesis</keyword>
<keyword id="KW-0547">Nucleotide-binding</keyword>
<keyword id="KW-0949">S-adenosyl-L-methionine</keyword>
<proteinExistence type="inferred from homology"/>
<evidence type="ECO:0000255" key="1">
    <source>
        <dbReference type="HAMAP-Rule" id="MF_01225"/>
    </source>
</evidence>
<evidence type="ECO:0000255" key="2">
    <source>
        <dbReference type="PROSITE-ProRule" id="PRU01266"/>
    </source>
</evidence>